<proteinExistence type="inferred from homology"/>
<keyword id="KW-1003">Cell membrane</keyword>
<keyword id="KW-0328">Glycosyltransferase</keyword>
<keyword id="KW-0444">Lipid biosynthesis</keyword>
<keyword id="KW-0443">Lipid metabolism</keyword>
<keyword id="KW-0460">Magnesium</keyword>
<keyword id="KW-0472">Membrane</keyword>
<keyword id="KW-0594">Phospholipid biosynthesis</keyword>
<keyword id="KW-1208">Phospholipid metabolism</keyword>
<keyword id="KW-1185">Reference proteome</keyword>
<keyword id="KW-0808">Transferase</keyword>
<evidence type="ECO:0000250" key="1">
    <source>
        <dbReference type="UniProtKB" id="A0QWG6"/>
    </source>
</evidence>
<evidence type="ECO:0000250" key="2">
    <source>
        <dbReference type="UniProtKB" id="P9WMZ5"/>
    </source>
</evidence>
<evidence type="ECO:0000305" key="3"/>
<dbReference type="EC" id="2.4.1.345" evidence="1"/>
<dbReference type="EMBL" id="Z96801">
    <property type="protein sequence ID" value="CAB09632.1"/>
    <property type="molecule type" value="Genomic_DNA"/>
</dbReference>
<dbReference type="EMBL" id="AL583918">
    <property type="protein sequence ID" value="CAC29960.1"/>
    <property type="molecule type" value="Genomic_DNA"/>
</dbReference>
<dbReference type="PIR" id="D86965">
    <property type="entry name" value="D86965"/>
</dbReference>
<dbReference type="RefSeq" id="NP_301406.1">
    <property type="nucleotide sequence ID" value="NC_002677.1"/>
</dbReference>
<dbReference type="RefSeq" id="WP_010907730.1">
    <property type="nucleotide sequence ID" value="NC_002677.1"/>
</dbReference>
<dbReference type="SMR" id="O07147"/>
<dbReference type="STRING" id="272631.gene:17574273"/>
<dbReference type="CAZy" id="GT4">
    <property type="family name" value="Glycosyltransferase Family 4"/>
</dbReference>
<dbReference type="KEGG" id="mle:ML0452"/>
<dbReference type="PATRIC" id="fig|272631.5.peg.795"/>
<dbReference type="Leproma" id="ML0452"/>
<dbReference type="eggNOG" id="COG0438">
    <property type="taxonomic scope" value="Bacteria"/>
</dbReference>
<dbReference type="HOGENOM" id="CLU_009583_2_1_11"/>
<dbReference type="OrthoDB" id="5240531at2"/>
<dbReference type="UniPathway" id="UPA00949"/>
<dbReference type="Proteomes" id="UP000000806">
    <property type="component" value="Chromosome"/>
</dbReference>
<dbReference type="GO" id="GO:0005886">
    <property type="term" value="C:plasma membrane"/>
    <property type="evidence" value="ECO:0007669"/>
    <property type="project" value="UniProtKB-SubCell"/>
</dbReference>
<dbReference type="GO" id="GO:0004377">
    <property type="term" value="F:GDP-Man:Man3GlcNAc2-PP-Dol alpha-1,2-mannosyltransferase activity"/>
    <property type="evidence" value="ECO:0000250"/>
    <property type="project" value="UniProtKB"/>
</dbReference>
<dbReference type="GO" id="GO:0043750">
    <property type="term" value="F:phosphatidylinositol alpha-mannosyltransferase activity"/>
    <property type="evidence" value="ECO:0000250"/>
    <property type="project" value="UniProtKB"/>
</dbReference>
<dbReference type="GO" id="GO:0009247">
    <property type="term" value="P:glycolipid biosynthetic process"/>
    <property type="evidence" value="ECO:0000250"/>
    <property type="project" value="UniProtKB"/>
</dbReference>
<dbReference type="GO" id="GO:0046488">
    <property type="term" value="P:phosphatidylinositol metabolic process"/>
    <property type="evidence" value="ECO:0000250"/>
    <property type="project" value="UniProtKB"/>
</dbReference>
<dbReference type="GO" id="GO:0008654">
    <property type="term" value="P:phospholipid biosynthetic process"/>
    <property type="evidence" value="ECO:0007669"/>
    <property type="project" value="UniProtKB-KW"/>
</dbReference>
<dbReference type="CDD" id="cd03801">
    <property type="entry name" value="GT4_PimA-like"/>
    <property type="match status" value="1"/>
</dbReference>
<dbReference type="FunFam" id="3.40.50.2000:FF:000207">
    <property type="entry name" value="Phosphatidyl-myo-inositol mannosyltransferase"/>
    <property type="match status" value="1"/>
</dbReference>
<dbReference type="Gene3D" id="3.40.50.2000">
    <property type="entry name" value="Glycogen Phosphorylase B"/>
    <property type="match status" value="2"/>
</dbReference>
<dbReference type="InterPro" id="IPR028098">
    <property type="entry name" value="Glyco_trans_4-like_N"/>
</dbReference>
<dbReference type="InterPro" id="IPR050194">
    <property type="entry name" value="Glycosyltransferase_grp1"/>
</dbReference>
<dbReference type="PANTHER" id="PTHR45947">
    <property type="entry name" value="SULFOQUINOVOSYL TRANSFERASE SQD2"/>
    <property type="match status" value="1"/>
</dbReference>
<dbReference type="PANTHER" id="PTHR45947:SF3">
    <property type="entry name" value="SULFOQUINOVOSYL TRANSFERASE SQD2"/>
    <property type="match status" value="1"/>
</dbReference>
<dbReference type="Pfam" id="PF13692">
    <property type="entry name" value="Glyco_trans_1_4"/>
    <property type="match status" value="1"/>
</dbReference>
<dbReference type="Pfam" id="PF13439">
    <property type="entry name" value="Glyco_transf_4"/>
    <property type="match status" value="1"/>
</dbReference>
<dbReference type="SUPFAM" id="SSF53756">
    <property type="entry name" value="UDP-Glycosyltransferase/glycogen phosphorylase"/>
    <property type="match status" value="1"/>
</dbReference>
<comment type="function">
    <text evidence="1">Involved in the biosynthesis of phosphatidyl-myo-inositol mannosides (PIM) which are early precursors in the biosynthesis of lipomannans (LM) and lipoarabinomannans (LAM). Catalyzes the addition of a mannosyl residue from GDP-D-mannose (GDP-Man) to the position 2 of the carrier lipid phosphatidyl-myo-inositol (PI) to generate a phosphatidyl-myo-inositol bearing an alpha-1,2-linked mannose residue (PIM1).</text>
</comment>
<comment type="catalytic activity">
    <reaction evidence="1">
        <text>a 1,2-diacyl-sn-glycero-3-phospho-(1D-myo-inositol) + GDP-alpha-D-mannose = a 1,2-diacyl-sn-glycero-3-phospho-[alpha-D-mannopyranosyl-(1&lt;-&gt;6)-D-myo-inositol] + GDP + H(+)</text>
        <dbReference type="Rhea" id="RHEA:47368"/>
        <dbReference type="ChEBI" id="CHEBI:15378"/>
        <dbReference type="ChEBI" id="CHEBI:57527"/>
        <dbReference type="ChEBI" id="CHEBI:57880"/>
        <dbReference type="ChEBI" id="CHEBI:58189"/>
        <dbReference type="ChEBI" id="CHEBI:87673"/>
        <dbReference type="EC" id="2.4.1.345"/>
    </reaction>
</comment>
<comment type="cofactor">
    <cofactor evidence="2">
        <name>Mg(2+)</name>
        <dbReference type="ChEBI" id="CHEBI:18420"/>
    </cofactor>
</comment>
<comment type="pathway">
    <text evidence="1">Phospholipid metabolism; phosphatidylinositol metabolism.</text>
</comment>
<comment type="subunit">
    <text evidence="1">Monomer.</text>
</comment>
<comment type="subcellular location">
    <subcellularLocation>
        <location evidence="1">Cell membrane</location>
        <topology evidence="1">Peripheral membrane protein</topology>
        <orientation evidence="1">Cytoplasmic side</orientation>
    </subcellularLocation>
</comment>
<comment type="similarity">
    <text evidence="3">Belongs to the glycosyltransferase group 1 family. Glycosyltransferase 4 subfamily.</text>
</comment>
<name>PIMA_MYCLE</name>
<reference key="1">
    <citation type="journal article" date="2001" name="Nature">
        <title>Massive gene decay in the leprosy bacillus.</title>
        <authorList>
            <person name="Cole S.T."/>
            <person name="Eiglmeier K."/>
            <person name="Parkhill J."/>
            <person name="James K.D."/>
            <person name="Thomson N.R."/>
            <person name="Wheeler P.R."/>
            <person name="Honore N."/>
            <person name="Garnier T."/>
            <person name="Churcher C.M."/>
            <person name="Harris D.E."/>
            <person name="Mungall K.L."/>
            <person name="Basham D."/>
            <person name="Brown D."/>
            <person name="Chillingworth T."/>
            <person name="Connor R."/>
            <person name="Davies R.M."/>
            <person name="Devlin K."/>
            <person name="Duthoy S."/>
            <person name="Feltwell T."/>
            <person name="Fraser A."/>
            <person name="Hamlin N."/>
            <person name="Holroyd S."/>
            <person name="Hornsby T."/>
            <person name="Jagels K."/>
            <person name="Lacroix C."/>
            <person name="Maclean J."/>
            <person name="Moule S."/>
            <person name="Murphy L.D."/>
            <person name="Oliver K."/>
            <person name="Quail M.A."/>
            <person name="Rajandream M.A."/>
            <person name="Rutherford K.M."/>
            <person name="Rutter S."/>
            <person name="Seeger K."/>
            <person name="Simon S."/>
            <person name="Simmonds M."/>
            <person name="Skelton J."/>
            <person name="Squares R."/>
            <person name="Squares S."/>
            <person name="Stevens K."/>
            <person name="Taylor K."/>
            <person name="Whitehead S."/>
            <person name="Woodward J.R."/>
            <person name="Barrell B.G."/>
        </authorList>
    </citation>
    <scope>NUCLEOTIDE SEQUENCE [LARGE SCALE GENOMIC DNA]</scope>
    <source>
        <strain>TN</strain>
    </source>
</reference>
<organism>
    <name type="scientific">Mycobacterium leprae (strain TN)</name>
    <dbReference type="NCBI Taxonomy" id="272631"/>
    <lineage>
        <taxon>Bacteria</taxon>
        <taxon>Bacillati</taxon>
        <taxon>Actinomycetota</taxon>
        <taxon>Actinomycetes</taxon>
        <taxon>Mycobacteriales</taxon>
        <taxon>Mycobacteriaceae</taxon>
        <taxon>Mycobacterium</taxon>
    </lineage>
</organism>
<sequence length="374" mass="40273">MRIGMICPYSFDVPGGVQSHVLQLAEVMRARGQQVRVLAPASPDVSLPEYVVSAGRAIPIPYNGSVARLQFSPAVHSRVRRWLVDGDFDVLHLHEPNAPSLSMWALRVAEGPIVATFHTSTTKSLTLSVFQGVLRPWHEKIIGRIAVSDLARRWQMEALGSDAVEIPNGVNVDSLSSAPQLAGYPRLGKTVLFLGRYDEPRKGMSVLLDALPGVMECFDDVQLLIVGRGDEEQLRSQAGGLVEHIRFLGQVDDAGKAAAMRSADVYCAPNIGGESFGIVLVEAMAAGTPVVASDLDAFRRVLRDGEVGHLVPAGDSAALADALVALLRNDVLRERYVAAGAEAVRRYDWSVVASQIMRVYETVATSGSKVQVAS</sequence>
<accession>O07147</accession>
<gene>
    <name evidence="1" type="primary">pimA</name>
    <name type="ordered locus">ML0452</name>
    <name type="ORF">MLCL581.14c</name>
</gene>
<feature type="chain" id="PRO_0000080301" description="Phosphatidyl-myo-inositol mannosyltransferase">
    <location>
        <begin position="1"/>
        <end position="374"/>
    </location>
</feature>
<feature type="binding site" evidence="1">
    <location>
        <position position="9"/>
    </location>
    <ligand>
        <name>GDP-alpha-D-mannose</name>
        <dbReference type="ChEBI" id="CHEBI:57527"/>
    </ligand>
</feature>
<feature type="binding site" evidence="1">
    <location>
        <position position="16"/>
    </location>
    <ligand>
        <name>GDP-alpha-D-mannose</name>
        <dbReference type="ChEBI" id="CHEBI:57527"/>
    </ligand>
</feature>
<feature type="binding site" evidence="1">
    <location>
        <position position="18"/>
    </location>
    <ligand>
        <name>a 1,2-diacyl-sn-glycero-3-phospho-(1D-myo-inositol)</name>
        <dbReference type="ChEBI" id="CHEBI:57880"/>
    </ligand>
</feature>
<feature type="binding site" evidence="1">
    <location>
        <begin position="62"/>
        <end position="63"/>
    </location>
    <ligand>
        <name>a 1,2-diacyl-sn-glycero-3-phospho-(1D-myo-inositol)</name>
        <dbReference type="ChEBI" id="CHEBI:57880"/>
    </ligand>
</feature>
<feature type="binding site" evidence="1">
    <location>
        <position position="68"/>
    </location>
    <ligand>
        <name>a 1,2-diacyl-sn-glycero-3-phospho-(1D-myo-inositol)</name>
        <dbReference type="ChEBI" id="CHEBI:57880"/>
    </ligand>
</feature>
<feature type="binding site" evidence="1">
    <location>
        <position position="196"/>
    </location>
    <ligand>
        <name>GDP-alpha-D-mannose</name>
        <dbReference type="ChEBI" id="CHEBI:57527"/>
    </ligand>
</feature>
<feature type="binding site" evidence="1">
    <location>
        <begin position="201"/>
        <end position="202"/>
    </location>
    <ligand>
        <name>GDP-alpha-D-mannose</name>
        <dbReference type="ChEBI" id="CHEBI:57527"/>
    </ligand>
</feature>
<feature type="binding site" evidence="1">
    <location>
        <begin position="251"/>
        <end position="253"/>
    </location>
    <ligand>
        <name>GDP-alpha-D-mannose</name>
        <dbReference type="ChEBI" id="CHEBI:57527"/>
    </ligand>
</feature>
<feature type="binding site" evidence="1">
    <location>
        <position position="256"/>
    </location>
    <ligand>
        <name>GDP-alpha-D-mannose</name>
        <dbReference type="ChEBI" id="CHEBI:57527"/>
    </ligand>
</feature>
<feature type="binding site" evidence="1">
    <location>
        <begin position="274"/>
        <end position="278"/>
    </location>
    <ligand>
        <name>GDP-alpha-D-mannose</name>
        <dbReference type="ChEBI" id="CHEBI:57527"/>
    </ligand>
</feature>
<feature type="binding site" evidence="1">
    <location>
        <position position="282"/>
    </location>
    <ligand>
        <name>GDP-alpha-D-mannose</name>
        <dbReference type="ChEBI" id="CHEBI:57527"/>
    </ligand>
</feature>
<feature type="site" description="Important for catalytic activity" evidence="1">
    <location>
        <position position="118"/>
    </location>
</feature>
<protein>
    <recommendedName>
        <fullName evidence="1">Phosphatidyl-myo-inositol mannosyltransferase</fullName>
        <ecNumber evidence="1">2.4.1.345</ecNumber>
    </recommendedName>
    <alternativeName>
        <fullName evidence="1">Alpha-mannosyltransferase</fullName>
    </alternativeName>
    <alternativeName>
        <fullName evidence="1">GDP-mannose-dependent alpha-(1-2)-phosphatidylinositol mannosyltransferase</fullName>
    </alternativeName>
    <alternativeName>
        <fullName evidence="3">Guanosine diphosphomannose-phosphatidyl-inositol alpha-mannosyltransferase</fullName>
    </alternativeName>
    <alternativeName>
        <fullName evidence="1">Phosphatidylinositol alpha-mannosyltransferase</fullName>
        <shortName evidence="1">PI alpha-mannosyltransferase</shortName>
    </alternativeName>
</protein>